<gene>
    <name evidence="1 4" type="primary">cmoB</name>
    <name type="synonym">yecP</name>
    <name type="ordered locus">b1871</name>
    <name type="ordered locus">JW1860</name>
</gene>
<organism>
    <name type="scientific">Escherichia coli (strain K12)</name>
    <dbReference type="NCBI Taxonomy" id="83333"/>
    <lineage>
        <taxon>Bacteria</taxon>
        <taxon>Pseudomonadati</taxon>
        <taxon>Pseudomonadota</taxon>
        <taxon>Gammaproteobacteria</taxon>
        <taxon>Enterobacterales</taxon>
        <taxon>Enterobacteriaceae</taxon>
        <taxon>Escherichia</taxon>
    </lineage>
</organism>
<comment type="function">
    <text evidence="2 3">Catalyzes carboxymethyl transfer from carboxy-S-adenosyl-L-methionine (Cx-SAM) to 5-hydroxyuridine (ho5U) to form 5-carboxymethoxyuridine (cmo5U) at position 34 in tRNAs. Can also catalyze the SAM-dependent methylation of ho5U, with much lower efficiency.</text>
</comment>
<comment type="catalytic activity">
    <reaction evidence="1 2 3">
        <text>carboxy-S-adenosyl-L-methionine + 5-hydroxyuridine(34) in tRNA = 5-carboxymethoxyuridine(34) in tRNA + S-adenosyl-L-homocysteine + H(+)</text>
        <dbReference type="Rhea" id="RHEA:52848"/>
        <dbReference type="Rhea" id="RHEA-COMP:13381"/>
        <dbReference type="Rhea" id="RHEA-COMP:13383"/>
        <dbReference type="ChEBI" id="CHEBI:15378"/>
        <dbReference type="ChEBI" id="CHEBI:57856"/>
        <dbReference type="ChEBI" id="CHEBI:134278"/>
        <dbReference type="ChEBI" id="CHEBI:136877"/>
        <dbReference type="ChEBI" id="CHEBI:136879"/>
    </reaction>
</comment>
<comment type="subunit">
    <text evidence="1 3">Homotetramer.</text>
</comment>
<comment type="similarity">
    <text evidence="1 5">Belongs to the class I-like SAM-binding methyltransferase superfamily. CmoB family.</text>
</comment>
<reference key="1">
    <citation type="journal article" date="1996" name="DNA Res.">
        <title>A 460-kb DNA sequence of the Escherichia coli K-12 genome corresponding to the 40.1-50.0 min region on the linkage map.</title>
        <authorList>
            <person name="Itoh T."/>
            <person name="Aiba H."/>
            <person name="Baba T."/>
            <person name="Fujita K."/>
            <person name="Hayashi K."/>
            <person name="Inada T."/>
            <person name="Isono K."/>
            <person name="Kasai H."/>
            <person name="Kimura S."/>
            <person name="Kitakawa M."/>
            <person name="Kitagawa M."/>
            <person name="Makino K."/>
            <person name="Miki T."/>
            <person name="Mizobuchi K."/>
            <person name="Mori H."/>
            <person name="Mori T."/>
            <person name="Motomura K."/>
            <person name="Nakade S."/>
            <person name="Nakamura Y."/>
            <person name="Nashimoto H."/>
            <person name="Nishio Y."/>
            <person name="Oshima T."/>
            <person name="Saito N."/>
            <person name="Sampei G."/>
            <person name="Seki Y."/>
            <person name="Sivasundaram S."/>
            <person name="Tagami H."/>
            <person name="Takeda J."/>
            <person name="Takemoto K."/>
            <person name="Wada C."/>
            <person name="Yamamoto Y."/>
            <person name="Horiuchi T."/>
        </authorList>
    </citation>
    <scope>NUCLEOTIDE SEQUENCE [LARGE SCALE GENOMIC DNA]</scope>
    <source>
        <strain>K12 / W3110 / ATCC 27325 / DSM 5911</strain>
    </source>
</reference>
<reference key="2">
    <citation type="journal article" date="1997" name="Science">
        <title>The complete genome sequence of Escherichia coli K-12.</title>
        <authorList>
            <person name="Blattner F.R."/>
            <person name="Plunkett G. III"/>
            <person name="Bloch C.A."/>
            <person name="Perna N.T."/>
            <person name="Burland V."/>
            <person name="Riley M."/>
            <person name="Collado-Vides J."/>
            <person name="Glasner J.D."/>
            <person name="Rode C.K."/>
            <person name="Mayhew G.F."/>
            <person name="Gregor J."/>
            <person name="Davis N.W."/>
            <person name="Kirkpatrick H.A."/>
            <person name="Goeden M.A."/>
            <person name="Rose D.J."/>
            <person name="Mau B."/>
            <person name="Shao Y."/>
        </authorList>
    </citation>
    <scope>NUCLEOTIDE SEQUENCE [LARGE SCALE GENOMIC DNA]</scope>
    <source>
        <strain>K12 / MG1655 / ATCC 47076</strain>
    </source>
</reference>
<reference key="3">
    <citation type="journal article" date="2006" name="Mol. Syst. Biol.">
        <title>Highly accurate genome sequences of Escherichia coli K-12 strains MG1655 and W3110.</title>
        <authorList>
            <person name="Hayashi K."/>
            <person name="Morooka N."/>
            <person name="Yamamoto Y."/>
            <person name="Fujita K."/>
            <person name="Isono K."/>
            <person name="Choi S."/>
            <person name="Ohtsubo E."/>
            <person name="Baba T."/>
            <person name="Wanner B.L."/>
            <person name="Mori H."/>
            <person name="Horiuchi T."/>
        </authorList>
    </citation>
    <scope>NUCLEOTIDE SEQUENCE [LARGE SCALE GENOMIC DNA]</scope>
    <source>
        <strain>K12 / W3110 / ATCC 27325 / DSM 5911</strain>
    </source>
</reference>
<reference key="4">
    <citation type="journal article" date="2013" name="Nature">
        <title>Structure-guided discovery of the metabolite carboxy-SAM that modulates tRNA function.</title>
        <authorList>
            <person name="Kim J."/>
            <person name="Xiao H."/>
            <person name="Bonanno J.B."/>
            <person name="Kalyanaraman C."/>
            <person name="Brown S."/>
            <person name="Tang X."/>
            <person name="Al-Obaidi N.F."/>
            <person name="Patskovsky Y."/>
            <person name="Babbitt P.C."/>
            <person name="Jacobson M.P."/>
            <person name="Lee Y.S."/>
            <person name="Almo S.C."/>
        </authorList>
    </citation>
    <scope>FUNCTION</scope>
    <scope>CATALYTIC ACTIVITY</scope>
</reference>
<reference key="5">
    <citation type="journal article" date="2015" name="Nucleic Acids Res.">
        <title>Determinants of the CmoB carboxymethyl transferase utilized for selective tRNA wobble modification.</title>
        <authorList>
            <person name="Kim J."/>
            <person name="Xiao H."/>
            <person name="Koh J."/>
            <person name="Wang Y."/>
            <person name="Bonanno J.B."/>
            <person name="Thomas K."/>
            <person name="Babbitt P.C."/>
            <person name="Brown S."/>
            <person name="Lee Y.S."/>
            <person name="Almo S.C."/>
        </authorList>
    </citation>
    <scope>X-RAY CRYSTALLOGRAPHY (2.60 ANGSTROMS) IN COMPLEX WITH CARBOXY-S-ADENOSYL-L-METHIONINE</scope>
    <scope>FUNCTION</scope>
    <scope>CATALYTIC ACTIVITY</scope>
    <scope>SUBUNIT</scope>
    <scope>MUTAGENESIS OF LYS-91; TYR-200 AND ARG-315</scope>
</reference>
<evidence type="ECO:0000255" key="1">
    <source>
        <dbReference type="HAMAP-Rule" id="MF_01590"/>
    </source>
</evidence>
<evidence type="ECO:0000269" key="2">
    <source>
    </source>
</evidence>
<evidence type="ECO:0000269" key="3">
    <source>
    </source>
</evidence>
<evidence type="ECO:0000303" key="4">
    <source>
    </source>
</evidence>
<evidence type="ECO:0000305" key="5"/>
<evidence type="ECO:0007744" key="6">
    <source>
        <dbReference type="PDB" id="4QNU"/>
    </source>
</evidence>
<evidence type="ECO:0007744" key="7">
    <source>
        <dbReference type="PDB" id="4QNV"/>
    </source>
</evidence>
<evidence type="ECO:0007829" key="8">
    <source>
        <dbReference type="PDB" id="4QNX"/>
    </source>
</evidence>
<accession>P76291</accession>
<accession>O07983</accession>
<name>CMOB_ECOLI</name>
<sequence length="323" mass="37007">MIDFGNFYSLIAKNHLSHWLETLPAQIANWQREQQHGLFKQWSNAVEFLPEIKPYRLDLLHSVTAESEEPLSAGQIKRIETLMRNLMPWRKGPFSLYGVNIDTEWRSDWKWDRVLPHLSDLTGRTILDVGCGSGYHMWRMIGAGAHLAVGIDPTQLFLCQFEAVRKLLGNDQRAHLLPLGIEQLPALKAFDTVFSMGVLYHRRSPLEHLWQLKDQLVNEGELVLETLVIDGDENTVLVPGDRYAQMRNVYFIPSALALKNWLKKCGFVDIRIADVSVTTTEEQRRTEWMVTESLADFLDPHDPGKTVEGYPAPKRAVLIARKP</sequence>
<proteinExistence type="evidence at protein level"/>
<feature type="chain" id="PRO_0000169085" description="tRNA U34 carboxymethyltransferase">
    <location>
        <begin position="1"/>
        <end position="323"/>
    </location>
</feature>
<feature type="binding site" evidence="1 6 7">
    <location>
        <position position="91"/>
    </location>
    <ligand>
        <name>carboxy-S-adenosyl-L-methionine</name>
        <dbReference type="ChEBI" id="CHEBI:134278"/>
    </ligand>
</feature>
<feature type="binding site" evidence="1 6">
    <location>
        <position position="105"/>
    </location>
    <ligand>
        <name>carboxy-S-adenosyl-L-methionine</name>
        <dbReference type="ChEBI" id="CHEBI:134278"/>
    </ligand>
</feature>
<feature type="binding site" evidence="1 6 7">
    <location>
        <position position="110"/>
    </location>
    <ligand>
        <name>carboxy-S-adenosyl-L-methionine</name>
        <dbReference type="ChEBI" id="CHEBI:134278"/>
    </ligand>
</feature>
<feature type="binding site" evidence="1 6 7">
    <location>
        <position position="130"/>
    </location>
    <ligand>
        <name>carboxy-S-adenosyl-L-methionine</name>
        <dbReference type="ChEBI" id="CHEBI:134278"/>
    </ligand>
</feature>
<feature type="binding site" evidence="1 6 7">
    <location>
        <begin position="152"/>
        <end position="154"/>
    </location>
    <ligand>
        <name>carboxy-S-adenosyl-L-methionine</name>
        <dbReference type="ChEBI" id="CHEBI:134278"/>
    </ligand>
</feature>
<feature type="binding site" evidence="1 6 7">
    <location>
        <begin position="181"/>
        <end position="182"/>
    </location>
    <ligand>
        <name>carboxy-S-adenosyl-L-methionine</name>
        <dbReference type="ChEBI" id="CHEBI:134278"/>
    </ligand>
</feature>
<feature type="binding site" evidence="1 6 7">
    <location>
        <position position="196"/>
    </location>
    <ligand>
        <name>carboxy-S-adenosyl-L-methionine</name>
        <dbReference type="ChEBI" id="CHEBI:134278"/>
    </ligand>
</feature>
<feature type="binding site" evidence="1 6 7">
    <location>
        <position position="200"/>
    </location>
    <ligand>
        <name>carboxy-S-adenosyl-L-methionine</name>
        <dbReference type="ChEBI" id="CHEBI:134278"/>
    </ligand>
</feature>
<feature type="binding site" evidence="1 6 7">
    <location>
        <position position="315"/>
    </location>
    <ligand>
        <name>carboxy-S-adenosyl-L-methionine</name>
        <dbReference type="ChEBI" id="CHEBI:134278"/>
    </ligand>
</feature>
<feature type="mutagenesis site" description="Decreases affinity toward Cx-SAM and increases affinity toward SAM. Lack of carboxymethyltransferase activity, but can still produce mho5U.">
    <original>K</original>
    <variation>A</variation>
    <location>
        <position position="91"/>
    </location>
</feature>
<feature type="mutagenesis site" description="Slight decrease in Cx-SAM binding affinity. Does not affect carboxymethyltransferase activity.">
    <original>Y</original>
    <variation>A</variation>
    <location>
        <position position="200"/>
    </location>
</feature>
<feature type="mutagenesis site" description="Slight decrease in Cx-SAM binding affinity. Does not affect carboxymethyltransferase activity.">
    <original>R</original>
    <variation>A</variation>
    <location>
        <position position="315"/>
    </location>
</feature>
<feature type="helix" evidence="8">
    <location>
        <begin position="5"/>
        <end position="11"/>
    </location>
</feature>
<feature type="helix" evidence="8">
    <location>
        <begin position="17"/>
        <end position="21"/>
    </location>
</feature>
<feature type="helix" evidence="8">
    <location>
        <begin position="23"/>
        <end position="33"/>
    </location>
</feature>
<feature type="helix" evidence="8">
    <location>
        <begin position="38"/>
        <end position="48"/>
    </location>
</feature>
<feature type="strand" evidence="8">
    <location>
        <begin position="55"/>
        <end position="62"/>
    </location>
</feature>
<feature type="strand" evidence="8">
    <location>
        <begin position="64"/>
        <end position="66"/>
    </location>
</feature>
<feature type="helix" evidence="8">
    <location>
        <begin position="73"/>
        <end position="84"/>
    </location>
</feature>
<feature type="strand" evidence="8">
    <location>
        <begin position="94"/>
        <end position="96"/>
    </location>
</feature>
<feature type="strand" evidence="8">
    <location>
        <begin position="99"/>
        <end position="101"/>
    </location>
</feature>
<feature type="strand" evidence="8">
    <location>
        <begin position="104"/>
        <end position="106"/>
    </location>
</feature>
<feature type="helix" evidence="8">
    <location>
        <begin position="107"/>
        <end position="114"/>
    </location>
</feature>
<feature type="helix" evidence="8">
    <location>
        <begin position="115"/>
        <end position="117"/>
    </location>
</feature>
<feature type="strand" evidence="8">
    <location>
        <begin position="125"/>
        <end position="129"/>
    </location>
</feature>
<feature type="helix" evidence="8">
    <location>
        <begin position="135"/>
        <end position="142"/>
    </location>
</feature>
<feature type="strand" evidence="8">
    <location>
        <begin position="146"/>
        <end position="151"/>
    </location>
</feature>
<feature type="helix" evidence="8">
    <location>
        <begin position="155"/>
        <end position="167"/>
    </location>
</feature>
<feature type="strand" evidence="8">
    <location>
        <begin position="173"/>
        <end position="177"/>
    </location>
</feature>
<feature type="helix" evidence="8">
    <location>
        <begin position="181"/>
        <end position="183"/>
    </location>
</feature>
<feature type="strand" evidence="8">
    <location>
        <begin position="190"/>
        <end position="197"/>
    </location>
</feature>
<feature type="helix" evidence="8">
    <location>
        <begin position="199"/>
        <end position="201"/>
    </location>
</feature>
<feature type="helix" evidence="8">
    <location>
        <begin position="205"/>
        <end position="213"/>
    </location>
</feature>
<feature type="strand" evidence="8">
    <location>
        <begin position="216"/>
        <end position="227"/>
    </location>
</feature>
<feature type="strand" evidence="8">
    <location>
        <begin position="252"/>
        <end position="254"/>
    </location>
</feature>
<feature type="helix" evidence="8">
    <location>
        <begin position="255"/>
        <end position="264"/>
    </location>
</feature>
<feature type="strand" evidence="8">
    <location>
        <begin position="268"/>
        <end position="277"/>
    </location>
</feature>
<feature type="turn" evidence="8">
    <location>
        <begin position="280"/>
        <end position="282"/>
    </location>
</feature>
<feature type="helix" evidence="8">
    <location>
        <begin position="294"/>
        <end position="297"/>
    </location>
</feature>
<feature type="strand" evidence="8">
    <location>
        <begin position="302"/>
        <end position="306"/>
    </location>
</feature>
<feature type="strand" evidence="8">
    <location>
        <begin position="309"/>
        <end position="311"/>
    </location>
</feature>
<feature type="strand" evidence="8">
    <location>
        <begin position="314"/>
        <end position="321"/>
    </location>
</feature>
<keyword id="KW-0002">3D-structure</keyword>
<keyword id="KW-1185">Reference proteome</keyword>
<keyword id="KW-0808">Transferase</keyword>
<keyword id="KW-0819">tRNA processing</keyword>
<dbReference type="EC" id="2.5.1.-" evidence="1 2 3"/>
<dbReference type="EMBL" id="U00096">
    <property type="protein sequence ID" value="AAC74941.1"/>
    <property type="molecule type" value="Genomic_DNA"/>
</dbReference>
<dbReference type="EMBL" id="AP009048">
    <property type="protein sequence ID" value="BAA15681.1"/>
    <property type="molecule type" value="Genomic_DNA"/>
</dbReference>
<dbReference type="PIR" id="G64949">
    <property type="entry name" value="G64949"/>
</dbReference>
<dbReference type="RefSeq" id="NP_416385.1">
    <property type="nucleotide sequence ID" value="NC_000913.3"/>
</dbReference>
<dbReference type="RefSeq" id="WP_000564725.1">
    <property type="nucleotide sequence ID" value="NZ_SSZK01000001.1"/>
</dbReference>
<dbReference type="PDB" id="4QNU">
    <property type="method" value="X-ray"/>
    <property type="resolution" value="2.60 A"/>
    <property type="chains" value="A/B/C/D/E/F/G/H=1-323"/>
</dbReference>
<dbReference type="PDB" id="4QNV">
    <property type="method" value="X-ray"/>
    <property type="resolution" value="2.64 A"/>
    <property type="chains" value="A/B=1-323"/>
</dbReference>
<dbReference type="PDB" id="4QNX">
    <property type="method" value="X-ray"/>
    <property type="resolution" value="2.62 A"/>
    <property type="chains" value="A/B=1-323"/>
</dbReference>
<dbReference type="PDBsum" id="4QNU"/>
<dbReference type="PDBsum" id="4QNV"/>
<dbReference type="PDBsum" id="4QNX"/>
<dbReference type="SMR" id="P76291"/>
<dbReference type="BioGRID" id="4260349">
    <property type="interactions" value="50"/>
</dbReference>
<dbReference type="FunCoup" id="P76291">
    <property type="interactions" value="30"/>
</dbReference>
<dbReference type="IntAct" id="P76291">
    <property type="interactions" value="7"/>
</dbReference>
<dbReference type="STRING" id="511145.b1871"/>
<dbReference type="jPOST" id="P76291"/>
<dbReference type="PaxDb" id="511145-b1871"/>
<dbReference type="EnsemblBacteria" id="AAC74941">
    <property type="protein sequence ID" value="AAC74941"/>
    <property type="gene ID" value="b1871"/>
</dbReference>
<dbReference type="GeneID" id="75171943"/>
<dbReference type="GeneID" id="946387"/>
<dbReference type="KEGG" id="ecj:JW1860"/>
<dbReference type="KEGG" id="eco:b1871"/>
<dbReference type="KEGG" id="ecoc:C3026_10650"/>
<dbReference type="PATRIC" id="fig|1411691.4.peg.377"/>
<dbReference type="EchoBASE" id="EB3788"/>
<dbReference type="eggNOG" id="COG0500">
    <property type="taxonomic scope" value="Bacteria"/>
</dbReference>
<dbReference type="HOGENOM" id="CLU_052665_0_0_6"/>
<dbReference type="InParanoid" id="P76291"/>
<dbReference type="OMA" id="CEWRSDF"/>
<dbReference type="OrthoDB" id="9773188at2"/>
<dbReference type="PhylomeDB" id="P76291"/>
<dbReference type="BioCyc" id="EcoCyc:G7021-MONOMER"/>
<dbReference type="BioCyc" id="MetaCyc:G7021-MONOMER"/>
<dbReference type="EvolutionaryTrace" id="P76291"/>
<dbReference type="PRO" id="PR:P76291"/>
<dbReference type="Proteomes" id="UP000000625">
    <property type="component" value="Chromosome"/>
</dbReference>
<dbReference type="GO" id="GO:0032991">
    <property type="term" value="C:protein-containing complex"/>
    <property type="evidence" value="ECO:0000314"/>
    <property type="project" value="EcoCyc"/>
</dbReference>
<dbReference type="GO" id="GO:0042802">
    <property type="term" value="F:identical protein binding"/>
    <property type="evidence" value="ECO:0000314"/>
    <property type="project" value="EcoCyc"/>
</dbReference>
<dbReference type="GO" id="GO:0008168">
    <property type="term" value="F:methyltransferase activity"/>
    <property type="evidence" value="ECO:0000318"/>
    <property type="project" value="GO_Central"/>
</dbReference>
<dbReference type="GO" id="GO:0016765">
    <property type="term" value="F:transferase activity, transferring alkyl or aryl (other than methyl) groups"/>
    <property type="evidence" value="ECO:0000314"/>
    <property type="project" value="EcoCyc"/>
</dbReference>
<dbReference type="GO" id="GO:0002098">
    <property type="term" value="P:tRNA wobble uridine modification"/>
    <property type="evidence" value="ECO:0000314"/>
    <property type="project" value="EcoCyc"/>
</dbReference>
<dbReference type="CDD" id="cd02440">
    <property type="entry name" value="AdoMet_MTases"/>
    <property type="match status" value="1"/>
</dbReference>
<dbReference type="FunFam" id="3.40.50.150:FF:000080">
    <property type="entry name" value="tRNA U34 carboxymethyltransferase"/>
    <property type="match status" value="1"/>
</dbReference>
<dbReference type="Gene3D" id="3.40.50.150">
    <property type="entry name" value="Vaccinia Virus protein VP39"/>
    <property type="match status" value="1"/>
</dbReference>
<dbReference type="HAMAP" id="MF_01590">
    <property type="entry name" value="tRNA_carboxymethyltr_CmoB"/>
    <property type="match status" value="1"/>
</dbReference>
<dbReference type="InterPro" id="IPR010017">
    <property type="entry name" value="CmoB"/>
</dbReference>
<dbReference type="InterPro" id="IPR027555">
    <property type="entry name" value="Mo5U34_MeTrfas-like"/>
</dbReference>
<dbReference type="InterPro" id="IPR029063">
    <property type="entry name" value="SAM-dependent_MTases_sf"/>
</dbReference>
<dbReference type="NCBIfam" id="NF011650">
    <property type="entry name" value="PRK15068.1"/>
    <property type="match status" value="1"/>
</dbReference>
<dbReference type="NCBIfam" id="TIGR00452">
    <property type="entry name" value="tRNA 5-methoxyuridine(34)/uridine 5-oxyacetic acid(34) synthase CmoB"/>
    <property type="match status" value="1"/>
</dbReference>
<dbReference type="PANTHER" id="PTHR43861">
    <property type="entry name" value="TRANS-ACONITATE 2-METHYLTRANSFERASE-RELATED"/>
    <property type="match status" value="1"/>
</dbReference>
<dbReference type="Pfam" id="PF08003">
    <property type="entry name" value="Methyltransf_9"/>
    <property type="match status" value="1"/>
</dbReference>
<dbReference type="SUPFAM" id="SSF53335">
    <property type="entry name" value="S-adenosyl-L-methionine-dependent methyltransferases"/>
    <property type="match status" value="1"/>
</dbReference>
<protein>
    <recommendedName>
        <fullName evidence="1 5">tRNA U34 carboxymethyltransferase</fullName>
        <ecNumber evidence="1 2 3">2.5.1.-</ecNumber>
    </recommendedName>
</protein>